<evidence type="ECO:0000255" key="1">
    <source>
        <dbReference type="HAMAP-Rule" id="MF_00445"/>
    </source>
</evidence>
<sequence>MTITPQNLIALLPLLIVGLTVVVVMLSIAWRRNHFLNATLSVIGLNAALVSLWFVGQAGAMDVTPLMRVDGFAMLYTGLVLLASLATCTFAYPWLEGYNDNKDEFYLLVLIAALGGILLANANHLASLFLGIELISLPLFGLVGYAFRQKRSLEASIKYTILSAAASSFLLFGMALVYAQSGDLSFVALGKNLGDGMLNEPLLLAGFGLMIVGLGFKLSLVPFHLWTPDVYQGAPAPVSTFLATASKIAIFGVVMRLFLYAPVGDSEAIRVVLAIIAFASIIFGNLMALSQTNIKRLLGYSSISHLGYLLVALIALQTGEMSMEAVGVYLAGYLFSSLGAFGVVSLMSSPYRGPDADSLFSYRGLFWHRPILAAVMTVMMLSLAGIPMTLGFIGKFYVLAVGVQTHLWWLVGAVVVGSAIGLYYYLRVAVSLYLHAPEQPGRDAPSNWQYSAGGIVVLISALLVLVLGVWPQPLISIVRLAMPLM</sequence>
<reference key="1">
    <citation type="submission" date="2008-02" db="EMBL/GenBank/DDBJ databases">
        <title>Complete sequence of Escherichia coli C str. ATCC 8739.</title>
        <authorList>
            <person name="Copeland A."/>
            <person name="Lucas S."/>
            <person name="Lapidus A."/>
            <person name="Glavina del Rio T."/>
            <person name="Dalin E."/>
            <person name="Tice H."/>
            <person name="Bruce D."/>
            <person name="Goodwin L."/>
            <person name="Pitluck S."/>
            <person name="Kiss H."/>
            <person name="Brettin T."/>
            <person name="Detter J.C."/>
            <person name="Han C."/>
            <person name="Kuske C.R."/>
            <person name="Schmutz J."/>
            <person name="Larimer F."/>
            <person name="Land M."/>
            <person name="Hauser L."/>
            <person name="Kyrpides N."/>
            <person name="Mikhailova N."/>
            <person name="Ingram L."/>
            <person name="Richardson P."/>
        </authorList>
    </citation>
    <scope>NUCLEOTIDE SEQUENCE [LARGE SCALE GENOMIC DNA]</scope>
    <source>
        <strain>ATCC 8739 / DSM 1576 / NBRC 3972 / NCIMB 8545 / WDCM 00012 / Crooks</strain>
    </source>
</reference>
<protein>
    <recommendedName>
        <fullName evidence="1">NADH-quinone oxidoreductase subunit N</fullName>
        <ecNumber evidence="1">7.1.1.-</ecNumber>
    </recommendedName>
    <alternativeName>
        <fullName evidence="1">NADH dehydrogenase I subunit N</fullName>
    </alternativeName>
    <alternativeName>
        <fullName evidence="1">NDH-1 subunit N</fullName>
    </alternativeName>
</protein>
<gene>
    <name evidence="1" type="primary">nuoN</name>
    <name type="ordered locus">EcolC_1376</name>
</gene>
<comment type="function">
    <text evidence="1">NDH-1 shuttles electrons from NADH, via FMN and iron-sulfur (Fe-S) centers, to quinones in the respiratory chain. The immediate electron acceptor for the enzyme in this species is believed to be ubiquinone. Couples the redox reaction to proton translocation (for every two electrons transferred, four hydrogen ions are translocated across the cytoplasmic membrane), and thus conserves the redox energy in a proton gradient.</text>
</comment>
<comment type="catalytic activity">
    <reaction evidence="1">
        <text>a quinone + NADH + 5 H(+)(in) = a quinol + NAD(+) + 4 H(+)(out)</text>
        <dbReference type="Rhea" id="RHEA:57888"/>
        <dbReference type="ChEBI" id="CHEBI:15378"/>
        <dbReference type="ChEBI" id="CHEBI:24646"/>
        <dbReference type="ChEBI" id="CHEBI:57540"/>
        <dbReference type="ChEBI" id="CHEBI:57945"/>
        <dbReference type="ChEBI" id="CHEBI:132124"/>
    </reaction>
</comment>
<comment type="subunit">
    <text evidence="1">NDH-1 is composed of 13 different subunits. Subunits NuoA, H, J, K, L, M, N constitute the membrane sector of the complex.</text>
</comment>
<comment type="subcellular location">
    <subcellularLocation>
        <location evidence="1">Cell inner membrane</location>
        <topology evidence="1">Multi-pass membrane protein</topology>
    </subcellularLocation>
</comment>
<comment type="similarity">
    <text evidence="1">Belongs to the complex I subunit 2 family.</text>
</comment>
<proteinExistence type="inferred from homology"/>
<feature type="chain" id="PRO_1000087448" description="NADH-quinone oxidoreductase subunit N">
    <location>
        <begin position="1"/>
        <end position="485"/>
    </location>
</feature>
<feature type="transmembrane region" description="Helical" evidence="1">
    <location>
        <begin position="8"/>
        <end position="28"/>
    </location>
</feature>
<feature type="transmembrane region" description="Helical" evidence="1">
    <location>
        <begin position="35"/>
        <end position="55"/>
    </location>
</feature>
<feature type="transmembrane region" description="Helical" evidence="1">
    <location>
        <begin position="71"/>
        <end position="91"/>
    </location>
</feature>
<feature type="transmembrane region" description="Helical" evidence="1">
    <location>
        <begin position="105"/>
        <end position="125"/>
    </location>
</feature>
<feature type="transmembrane region" description="Helical" evidence="1">
    <location>
        <begin position="127"/>
        <end position="147"/>
    </location>
</feature>
<feature type="transmembrane region" description="Helical" evidence="1">
    <location>
        <begin position="159"/>
        <end position="179"/>
    </location>
</feature>
<feature type="transmembrane region" description="Helical" evidence="1">
    <location>
        <begin position="203"/>
        <end position="223"/>
    </location>
</feature>
<feature type="transmembrane region" description="Helical" evidence="1">
    <location>
        <begin position="235"/>
        <end position="255"/>
    </location>
</feature>
<feature type="transmembrane region" description="Helical" evidence="1">
    <location>
        <begin position="271"/>
        <end position="291"/>
    </location>
</feature>
<feature type="transmembrane region" description="Helical" evidence="1">
    <location>
        <begin position="297"/>
        <end position="317"/>
    </location>
</feature>
<feature type="transmembrane region" description="Helical" evidence="1">
    <location>
        <begin position="326"/>
        <end position="346"/>
    </location>
</feature>
<feature type="transmembrane region" description="Helical" evidence="1">
    <location>
        <begin position="373"/>
        <end position="393"/>
    </location>
</feature>
<feature type="transmembrane region" description="Helical" evidence="1">
    <location>
        <begin position="408"/>
        <end position="430"/>
    </location>
</feature>
<feature type="transmembrane region" description="Helical" evidence="1">
    <location>
        <begin position="455"/>
        <end position="475"/>
    </location>
</feature>
<dbReference type="EC" id="7.1.1.-" evidence="1"/>
<dbReference type="EMBL" id="CP000946">
    <property type="protein sequence ID" value="ACA77042.1"/>
    <property type="molecule type" value="Genomic_DNA"/>
</dbReference>
<dbReference type="RefSeq" id="WP_000156704.1">
    <property type="nucleotide sequence ID" value="NZ_MTFT01000028.1"/>
</dbReference>
<dbReference type="SMR" id="B1IXR6"/>
<dbReference type="KEGG" id="ecl:EcolC_1376"/>
<dbReference type="HOGENOM" id="CLU_007100_1_5_6"/>
<dbReference type="GO" id="GO:0005886">
    <property type="term" value="C:plasma membrane"/>
    <property type="evidence" value="ECO:0007669"/>
    <property type="project" value="UniProtKB-SubCell"/>
</dbReference>
<dbReference type="GO" id="GO:0008137">
    <property type="term" value="F:NADH dehydrogenase (ubiquinone) activity"/>
    <property type="evidence" value="ECO:0007669"/>
    <property type="project" value="InterPro"/>
</dbReference>
<dbReference type="GO" id="GO:0050136">
    <property type="term" value="F:NADH:ubiquinone reductase (non-electrogenic) activity"/>
    <property type="evidence" value="ECO:0007669"/>
    <property type="project" value="UniProtKB-UniRule"/>
</dbReference>
<dbReference type="GO" id="GO:0048038">
    <property type="term" value="F:quinone binding"/>
    <property type="evidence" value="ECO:0007669"/>
    <property type="project" value="UniProtKB-KW"/>
</dbReference>
<dbReference type="GO" id="GO:0042773">
    <property type="term" value="P:ATP synthesis coupled electron transport"/>
    <property type="evidence" value="ECO:0007669"/>
    <property type="project" value="InterPro"/>
</dbReference>
<dbReference type="HAMAP" id="MF_00445">
    <property type="entry name" value="NDH1_NuoN_1"/>
    <property type="match status" value="1"/>
</dbReference>
<dbReference type="InterPro" id="IPR010096">
    <property type="entry name" value="NADH-Q_OxRdtase_suN/2"/>
</dbReference>
<dbReference type="InterPro" id="IPR001750">
    <property type="entry name" value="ND/Mrp_TM"/>
</dbReference>
<dbReference type="NCBIfam" id="TIGR01770">
    <property type="entry name" value="NDH_I_N"/>
    <property type="match status" value="1"/>
</dbReference>
<dbReference type="NCBIfam" id="NF004439">
    <property type="entry name" value="PRK05777.1-1"/>
    <property type="match status" value="1"/>
</dbReference>
<dbReference type="PANTHER" id="PTHR22773">
    <property type="entry name" value="NADH DEHYDROGENASE"/>
    <property type="match status" value="1"/>
</dbReference>
<dbReference type="Pfam" id="PF00361">
    <property type="entry name" value="Proton_antipo_M"/>
    <property type="match status" value="1"/>
</dbReference>
<organism>
    <name type="scientific">Escherichia coli (strain ATCC 8739 / DSM 1576 / NBRC 3972 / NCIMB 8545 / WDCM 00012 / Crooks)</name>
    <dbReference type="NCBI Taxonomy" id="481805"/>
    <lineage>
        <taxon>Bacteria</taxon>
        <taxon>Pseudomonadati</taxon>
        <taxon>Pseudomonadota</taxon>
        <taxon>Gammaproteobacteria</taxon>
        <taxon>Enterobacterales</taxon>
        <taxon>Enterobacteriaceae</taxon>
        <taxon>Escherichia</taxon>
    </lineage>
</organism>
<keyword id="KW-0997">Cell inner membrane</keyword>
<keyword id="KW-1003">Cell membrane</keyword>
<keyword id="KW-0472">Membrane</keyword>
<keyword id="KW-0520">NAD</keyword>
<keyword id="KW-0874">Quinone</keyword>
<keyword id="KW-1278">Translocase</keyword>
<keyword id="KW-0812">Transmembrane</keyword>
<keyword id="KW-1133">Transmembrane helix</keyword>
<keyword id="KW-0813">Transport</keyword>
<keyword id="KW-0830">Ubiquinone</keyword>
<accession>B1IXR6</accession>
<name>NUON_ECOLC</name>